<feature type="chain" id="PRO_1000016779" description="Queuine tRNA-ribosyltransferase">
    <location>
        <begin position="1"/>
        <end position="376"/>
    </location>
</feature>
<feature type="region of interest" description="RNA binding" evidence="1">
    <location>
        <begin position="252"/>
        <end position="258"/>
    </location>
</feature>
<feature type="region of interest" description="RNA binding; important for wobble base 34 recognition" evidence="1">
    <location>
        <begin position="276"/>
        <end position="280"/>
    </location>
</feature>
<feature type="active site" description="Proton acceptor" evidence="1">
    <location>
        <position position="89"/>
    </location>
</feature>
<feature type="active site" description="Nucleophile" evidence="1">
    <location>
        <position position="271"/>
    </location>
</feature>
<feature type="binding site" evidence="1">
    <location>
        <begin position="89"/>
        <end position="93"/>
    </location>
    <ligand>
        <name>substrate</name>
    </ligand>
</feature>
<feature type="binding site" evidence="1">
    <location>
        <position position="143"/>
    </location>
    <ligand>
        <name>substrate</name>
    </ligand>
</feature>
<feature type="binding site" evidence="1">
    <location>
        <position position="194"/>
    </location>
    <ligand>
        <name>substrate</name>
    </ligand>
</feature>
<feature type="binding site" evidence="1">
    <location>
        <position position="221"/>
    </location>
    <ligand>
        <name>substrate</name>
    </ligand>
</feature>
<feature type="binding site" evidence="1">
    <location>
        <position position="309"/>
    </location>
    <ligand>
        <name>Zn(2+)</name>
        <dbReference type="ChEBI" id="CHEBI:29105"/>
    </ligand>
</feature>
<feature type="binding site" evidence="1">
    <location>
        <position position="311"/>
    </location>
    <ligand>
        <name>Zn(2+)</name>
        <dbReference type="ChEBI" id="CHEBI:29105"/>
    </ligand>
</feature>
<feature type="binding site" evidence="1">
    <location>
        <position position="314"/>
    </location>
    <ligand>
        <name>Zn(2+)</name>
        <dbReference type="ChEBI" id="CHEBI:29105"/>
    </ligand>
</feature>
<feature type="binding site" evidence="1">
    <location>
        <position position="340"/>
    </location>
    <ligand>
        <name>Zn(2+)</name>
        <dbReference type="ChEBI" id="CHEBI:29105"/>
    </ligand>
</feature>
<keyword id="KW-0328">Glycosyltransferase</keyword>
<keyword id="KW-0479">Metal-binding</keyword>
<keyword id="KW-0671">Queuosine biosynthesis</keyword>
<keyword id="KW-0808">Transferase</keyword>
<keyword id="KW-0819">tRNA processing</keyword>
<keyword id="KW-0862">Zinc</keyword>
<proteinExistence type="inferred from homology"/>
<protein>
    <recommendedName>
        <fullName evidence="1">Queuine tRNA-ribosyltransferase</fullName>
        <ecNumber evidence="1">2.4.2.29</ecNumber>
    </recommendedName>
    <alternativeName>
        <fullName evidence="1">Guanine insertion enzyme</fullName>
    </alternativeName>
    <alternativeName>
        <fullName evidence="1">tRNA-guanine transglycosylase</fullName>
    </alternativeName>
</protein>
<accession>A7FY17</accession>
<organism>
    <name type="scientific">Clostridium botulinum (strain ATCC 19397 / Type A)</name>
    <dbReference type="NCBI Taxonomy" id="441770"/>
    <lineage>
        <taxon>Bacteria</taxon>
        <taxon>Bacillati</taxon>
        <taxon>Bacillota</taxon>
        <taxon>Clostridia</taxon>
        <taxon>Eubacteriales</taxon>
        <taxon>Clostridiaceae</taxon>
        <taxon>Clostridium</taxon>
    </lineage>
</organism>
<gene>
    <name evidence="1" type="primary">tgt</name>
    <name type="ordered locus">CLB_3097</name>
</gene>
<evidence type="ECO:0000255" key="1">
    <source>
        <dbReference type="HAMAP-Rule" id="MF_00168"/>
    </source>
</evidence>
<dbReference type="EC" id="2.4.2.29" evidence="1"/>
<dbReference type="EMBL" id="CP000726">
    <property type="protein sequence ID" value="ABS33691.1"/>
    <property type="molecule type" value="Genomic_DNA"/>
</dbReference>
<dbReference type="RefSeq" id="WP_012048086.1">
    <property type="nucleotide sequence ID" value="NC_009697.1"/>
</dbReference>
<dbReference type="SMR" id="A7FY17"/>
<dbReference type="GeneID" id="5185716"/>
<dbReference type="KEGG" id="cba:CLB_3097"/>
<dbReference type="HOGENOM" id="CLU_022060_0_1_9"/>
<dbReference type="UniPathway" id="UPA00392"/>
<dbReference type="GO" id="GO:0005829">
    <property type="term" value="C:cytosol"/>
    <property type="evidence" value="ECO:0007669"/>
    <property type="project" value="TreeGrafter"/>
</dbReference>
<dbReference type="GO" id="GO:0046872">
    <property type="term" value="F:metal ion binding"/>
    <property type="evidence" value="ECO:0007669"/>
    <property type="project" value="UniProtKB-KW"/>
</dbReference>
<dbReference type="GO" id="GO:0008479">
    <property type="term" value="F:tRNA-guanosine(34) queuine transglycosylase activity"/>
    <property type="evidence" value="ECO:0007669"/>
    <property type="project" value="UniProtKB-UniRule"/>
</dbReference>
<dbReference type="GO" id="GO:0008616">
    <property type="term" value="P:queuosine biosynthetic process"/>
    <property type="evidence" value="ECO:0007669"/>
    <property type="project" value="UniProtKB-UniRule"/>
</dbReference>
<dbReference type="GO" id="GO:0002099">
    <property type="term" value="P:tRNA wobble guanine modification"/>
    <property type="evidence" value="ECO:0007669"/>
    <property type="project" value="TreeGrafter"/>
</dbReference>
<dbReference type="GO" id="GO:0101030">
    <property type="term" value="P:tRNA-guanine transglycosylation"/>
    <property type="evidence" value="ECO:0007669"/>
    <property type="project" value="InterPro"/>
</dbReference>
<dbReference type="FunFam" id="3.20.20.105:FF:000001">
    <property type="entry name" value="Queuine tRNA-ribosyltransferase"/>
    <property type="match status" value="1"/>
</dbReference>
<dbReference type="Gene3D" id="3.20.20.105">
    <property type="entry name" value="Queuine tRNA-ribosyltransferase-like"/>
    <property type="match status" value="1"/>
</dbReference>
<dbReference type="HAMAP" id="MF_00168">
    <property type="entry name" value="Q_tRNA_Tgt"/>
    <property type="match status" value="1"/>
</dbReference>
<dbReference type="InterPro" id="IPR050076">
    <property type="entry name" value="ArchSynthase1/Queuine_TRR"/>
</dbReference>
<dbReference type="InterPro" id="IPR004803">
    <property type="entry name" value="TGT"/>
</dbReference>
<dbReference type="InterPro" id="IPR036511">
    <property type="entry name" value="TGT-like_sf"/>
</dbReference>
<dbReference type="InterPro" id="IPR002616">
    <property type="entry name" value="tRNA_ribo_trans-like"/>
</dbReference>
<dbReference type="NCBIfam" id="TIGR00430">
    <property type="entry name" value="Q_tRNA_tgt"/>
    <property type="match status" value="1"/>
</dbReference>
<dbReference type="NCBIfam" id="TIGR00449">
    <property type="entry name" value="tgt_general"/>
    <property type="match status" value="1"/>
</dbReference>
<dbReference type="PANTHER" id="PTHR46499">
    <property type="entry name" value="QUEUINE TRNA-RIBOSYLTRANSFERASE"/>
    <property type="match status" value="1"/>
</dbReference>
<dbReference type="PANTHER" id="PTHR46499:SF1">
    <property type="entry name" value="QUEUINE TRNA-RIBOSYLTRANSFERASE"/>
    <property type="match status" value="1"/>
</dbReference>
<dbReference type="Pfam" id="PF01702">
    <property type="entry name" value="TGT"/>
    <property type="match status" value="1"/>
</dbReference>
<dbReference type="SUPFAM" id="SSF51713">
    <property type="entry name" value="tRNA-guanine transglycosylase"/>
    <property type="match status" value="1"/>
</dbReference>
<comment type="function">
    <text evidence="1">Catalyzes the base-exchange of a guanine (G) residue with the queuine precursor 7-aminomethyl-7-deazaguanine (PreQ1) at position 34 (anticodon wobble position) in tRNAs with GU(N) anticodons (tRNA-Asp, -Asn, -His and -Tyr). Catalysis occurs through a double-displacement mechanism. The nucleophile active site attacks the C1' of nucleotide 34 to detach the guanine base from the RNA, forming a covalent enzyme-RNA intermediate. The proton acceptor active site deprotonates the incoming PreQ1, allowing a nucleophilic attack on the C1' of the ribose to form the product. After dissociation, two additional enzymatic reactions on the tRNA convert PreQ1 to queuine (Q), resulting in the hypermodified nucleoside queuosine (7-(((4,5-cis-dihydroxy-2-cyclopenten-1-yl)amino)methyl)-7-deazaguanosine).</text>
</comment>
<comment type="catalytic activity">
    <reaction evidence="1">
        <text>7-aminomethyl-7-carbaguanine + guanosine(34) in tRNA = 7-aminomethyl-7-carbaguanosine(34) in tRNA + guanine</text>
        <dbReference type="Rhea" id="RHEA:24104"/>
        <dbReference type="Rhea" id="RHEA-COMP:10341"/>
        <dbReference type="Rhea" id="RHEA-COMP:10342"/>
        <dbReference type="ChEBI" id="CHEBI:16235"/>
        <dbReference type="ChEBI" id="CHEBI:58703"/>
        <dbReference type="ChEBI" id="CHEBI:74269"/>
        <dbReference type="ChEBI" id="CHEBI:82833"/>
        <dbReference type="EC" id="2.4.2.29"/>
    </reaction>
</comment>
<comment type="cofactor">
    <cofactor evidence="1">
        <name>Zn(2+)</name>
        <dbReference type="ChEBI" id="CHEBI:29105"/>
    </cofactor>
    <text evidence="1">Binds 1 zinc ion per subunit.</text>
</comment>
<comment type="pathway">
    <text evidence="1">tRNA modification; tRNA-queuosine biosynthesis.</text>
</comment>
<comment type="subunit">
    <text evidence="1">Homodimer. Within each dimer, one monomer is responsible for RNA recognition and catalysis, while the other monomer binds to the replacement base PreQ1.</text>
</comment>
<comment type="similarity">
    <text evidence="1">Belongs to the queuine tRNA-ribosyltransferase family.</text>
</comment>
<sequence>MYKLLKKSGKARRGEFTTPHGVIQTPVFMNVGTLAAIKGAVSSMDLKEIGCQVELSNTYHLHLRPGDEVVKKMGGLHKFMNWDRPILTDSGGFQVFSLSKIRKIQEEGVYFNSHIDGRKIFMGPEESMRIQSNLASTIAMAFDECVENPAPREYVEKSVERTTRWLHRCKDEMNRLNSLPDTINNKQMLFGINQGGTYEDIRIEHAKTIAKMDLDGYAIGGLAVGESHEDMYRIIDAVVPHLPEDKPIYLMGVGIPSNILEAVDRGVDFFDCVLPARNGRHAHVFTKEGKINLLNAKFELDDRPIDEGCQCPACKHYTRSYIRHLFKAKEMLAMRLCVLHNLYFYNNLMEEIRDAIDGNYFKEYKERKLKEWGGRA</sequence>
<name>TGT_CLOB1</name>
<reference key="1">
    <citation type="journal article" date="2007" name="PLoS ONE">
        <title>Analysis of the neurotoxin complex genes in Clostridium botulinum A1-A4 and B1 strains: BoNT/A3, /Ba4 and /B1 clusters are located within plasmids.</title>
        <authorList>
            <person name="Smith T.J."/>
            <person name="Hill K.K."/>
            <person name="Foley B.T."/>
            <person name="Detter J.C."/>
            <person name="Munk A.C."/>
            <person name="Bruce D.C."/>
            <person name="Doggett N.A."/>
            <person name="Smith L.A."/>
            <person name="Marks J.D."/>
            <person name="Xie G."/>
            <person name="Brettin T.S."/>
        </authorList>
    </citation>
    <scope>NUCLEOTIDE SEQUENCE [LARGE SCALE GENOMIC DNA]</scope>
    <source>
        <strain>ATCC 19397 / Type A</strain>
    </source>
</reference>